<reference key="1">
    <citation type="journal article" date="2002" name="Lancet">
        <title>Genome and virulence determinants of high virulence community-acquired MRSA.</title>
        <authorList>
            <person name="Baba T."/>
            <person name="Takeuchi F."/>
            <person name="Kuroda M."/>
            <person name="Yuzawa H."/>
            <person name="Aoki K."/>
            <person name="Oguchi A."/>
            <person name="Nagai Y."/>
            <person name="Iwama N."/>
            <person name="Asano K."/>
            <person name="Naimi T."/>
            <person name="Kuroda H."/>
            <person name="Cui L."/>
            <person name="Yamamoto K."/>
            <person name="Hiramatsu K."/>
        </authorList>
    </citation>
    <scope>NUCLEOTIDE SEQUENCE [LARGE SCALE GENOMIC DNA]</scope>
    <source>
        <strain>MW2</strain>
    </source>
</reference>
<feature type="chain" id="PRO_0000067797" description="DNA-directed RNA polymerase subunit beta'">
    <location>
        <begin position="1"/>
        <end position="1207"/>
    </location>
</feature>
<feature type="binding site" evidence="1">
    <location>
        <position position="60"/>
    </location>
    <ligand>
        <name>Zn(2+)</name>
        <dbReference type="ChEBI" id="CHEBI:29105"/>
        <label>1</label>
    </ligand>
</feature>
<feature type="binding site" evidence="1">
    <location>
        <position position="62"/>
    </location>
    <ligand>
        <name>Zn(2+)</name>
        <dbReference type="ChEBI" id="CHEBI:29105"/>
        <label>1</label>
    </ligand>
</feature>
<feature type="binding site" evidence="1">
    <location>
        <position position="75"/>
    </location>
    <ligand>
        <name>Zn(2+)</name>
        <dbReference type="ChEBI" id="CHEBI:29105"/>
        <label>1</label>
    </ligand>
</feature>
<feature type="binding site" evidence="1">
    <location>
        <position position="78"/>
    </location>
    <ligand>
        <name>Zn(2+)</name>
        <dbReference type="ChEBI" id="CHEBI:29105"/>
        <label>1</label>
    </ligand>
</feature>
<feature type="binding site" evidence="1">
    <location>
        <position position="449"/>
    </location>
    <ligand>
        <name>Mg(2+)</name>
        <dbReference type="ChEBI" id="CHEBI:18420"/>
    </ligand>
</feature>
<feature type="binding site" evidence="1">
    <location>
        <position position="451"/>
    </location>
    <ligand>
        <name>Mg(2+)</name>
        <dbReference type="ChEBI" id="CHEBI:18420"/>
    </ligand>
</feature>
<feature type="binding site" evidence="1">
    <location>
        <position position="453"/>
    </location>
    <ligand>
        <name>Mg(2+)</name>
        <dbReference type="ChEBI" id="CHEBI:18420"/>
    </ligand>
</feature>
<feature type="binding site" evidence="1">
    <location>
        <position position="822"/>
    </location>
    <ligand>
        <name>Zn(2+)</name>
        <dbReference type="ChEBI" id="CHEBI:29105"/>
        <label>2</label>
    </ligand>
</feature>
<feature type="binding site" evidence="1">
    <location>
        <position position="896"/>
    </location>
    <ligand>
        <name>Zn(2+)</name>
        <dbReference type="ChEBI" id="CHEBI:29105"/>
        <label>2</label>
    </ligand>
</feature>
<feature type="binding site" evidence="1">
    <location>
        <position position="903"/>
    </location>
    <ligand>
        <name>Zn(2+)</name>
        <dbReference type="ChEBI" id="CHEBI:29105"/>
        <label>2</label>
    </ligand>
</feature>
<feature type="binding site" evidence="1">
    <location>
        <position position="906"/>
    </location>
    <ligand>
        <name>Zn(2+)</name>
        <dbReference type="ChEBI" id="CHEBI:29105"/>
        <label>2</label>
    </ligand>
</feature>
<evidence type="ECO:0000255" key="1">
    <source>
        <dbReference type="HAMAP-Rule" id="MF_01322"/>
    </source>
</evidence>
<proteinExistence type="inferred from homology"/>
<comment type="function">
    <text evidence="1">DNA-dependent RNA polymerase catalyzes the transcription of DNA into RNA using the four ribonucleoside triphosphates as substrates.</text>
</comment>
<comment type="catalytic activity">
    <reaction evidence="1">
        <text>RNA(n) + a ribonucleoside 5'-triphosphate = RNA(n+1) + diphosphate</text>
        <dbReference type="Rhea" id="RHEA:21248"/>
        <dbReference type="Rhea" id="RHEA-COMP:14527"/>
        <dbReference type="Rhea" id="RHEA-COMP:17342"/>
        <dbReference type="ChEBI" id="CHEBI:33019"/>
        <dbReference type="ChEBI" id="CHEBI:61557"/>
        <dbReference type="ChEBI" id="CHEBI:140395"/>
        <dbReference type="EC" id="2.7.7.6"/>
    </reaction>
</comment>
<comment type="cofactor">
    <cofactor evidence="1">
        <name>Mg(2+)</name>
        <dbReference type="ChEBI" id="CHEBI:18420"/>
    </cofactor>
    <text evidence="1">Binds 1 Mg(2+) ion per subunit.</text>
</comment>
<comment type="cofactor">
    <cofactor evidence="1">
        <name>Zn(2+)</name>
        <dbReference type="ChEBI" id="CHEBI:29105"/>
    </cofactor>
    <text evidence="1">Binds 2 Zn(2+) ions per subunit.</text>
</comment>
<comment type="subunit">
    <text evidence="1">The RNAP catalytic core consists of 2 alpha, 1 beta, 1 beta' and 1 omega subunit. When a sigma factor is associated with the core the holoenzyme is formed, which can initiate transcription.</text>
</comment>
<comment type="similarity">
    <text evidence="1">Belongs to the RNA polymerase beta' chain family.</text>
</comment>
<organism>
    <name type="scientific">Staphylococcus aureus (strain MW2)</name>
    <dbReference type="NCBI Taxonomy" id="196620"/>
    <lineage>
        <taxon>Bacteria</taxon>
        <taxon>Bacillati</taxon>
        <taxon>Bacillota</taxon>
        <taxon>Bacilli</taxon>
        <taxon>Bacillales</taxon>
        <taxon>Staphylococcaceae</taxon>
        <taxon>Staphylococcus</taxon>
    </lineage>
</organism>
<protein>
    <recommendedName>
        <fullName evidence="1">DNA-directed RNA polymerase subunit beta'</fullName>
        <shortName evidence="1">RNAP subunit beta'</shortName>
        <ecNumber evidence="1">2.7.7.6</ecNumber>
    </recommendedName>
    <alternativeName>
        <fullName evidence="1">RNA polymerase subunit beta'</fullName>
    </alternativeName>
    <alternativeName>
        <fullName evidence="1">Transcriptase subunit beta'</fullName>
    </alternativeName>
</protein>
<name>RPOC_STAAW</name>
<keyword id="KW-0240">DNA-directed RNA polymerase</keyword>
<keyword id="KW-0460">Magnesium</keyword>
<keyword id="KW-0479">Metal-binding</keyword>
<keyword id="KW-0548">Nucleotidyltransferase</keyword>
<keyword id="KW-0804">Transcription</keyword>
<keyword id="KW-0808">Transferase</keyword>
<keyword id="KW-0862">Zinc</keyword>
<dbReference type="EC" id="2.7.7.6" evidence="1"/>
<dbReference type="EMBL" id="BA000033">
    <property type="protein sequence ID" value="BAB94363.1"/>
    <property type="molecule type" value="Genomic_DNA"/>
</dbReference>
<dbReference type="SMR" id="P60286"/>
<dbReference type="KEGG" id="sam:MW0498"/>
<dbReference type="HOGENOM" id="CLU_000524_3_0_9"/>
<dbReference type="GO" id="GO:0000428">
    <property type="term" value="C:DNA-directed RNA polymerase complex"/>
    <property type="evidence" value="ECO:0007669"/>
    <property type="project" value="UniProtKB-KW"/>
</dbReference>
<dbReference type="GO" id="GO:0003677">
    <property type="term" value="F:DNA binding"/>
    <property type="evidence" value="ECO:0007669"/>
    <property type="project" value="UniProtKB-UniRule"/>
</dbReference>
<dbReference type="GO" id="GO:0003899">
    <property type="term" value="F:DNA-directed RNA polymerase activity"/>
    <property type="evidence" value="ECO:0007669"/>
    <property type="project" value="UniProtKB-UniRule"/>
</dbReference>
<dbReference type="GO" id="GO:0000287">
    <property type="term" value="F:magnesium ion binding"/>
    <property type="evidence" value="ECO:0007669"/>
    <property type="project" value="UniProtKB-UniRule"/>
</dbReference>
<dbReference type="GO" id="GO:0008270">
    <property type="term" value="F:zinc ion binding"/>
    <property type="evidence" value="ECO:0007669"/>
    <property type="project" value="UniProtKB-UniRule"/>
</dbReference>
<dbReference type="GO" id="GO:0006351">
    <property type="term" value="P:DNA-templated transcription"/>
    <property type="evidence" value="ECO:0007669"/>
    <property type="project" value="UniProtKB-UniRule"/>
</dbReference>
<dbReference type="CDD" id="cd02655">
    <property type="entry name" value="RNAP_beta'_C"/>
    <property type="match status" value="1"/>
</dbReference>
<dbReference type="CDD" id="cd01609">
    <property type="entry name" value="RNAP_beta'_N"/>
    <property type="match status" value="1"/>
</dbReference>
<dbReference type="FunFam" id="1.10.132.30:FF:000003">
    <property type="entry name" value="DNA-directed RNA polymerase subunit beta"/>
    <property type="match status" value="1"/>
</dbReference>
<dbReference type="FunFam" id="1.10.150.390:FF:000002">
    <property type="entry name" value="DNA-directed RNA polymerase subunit beta"/>
    <property type="match status" value="1"/>
</dbReference>
<dbReference type="FunFam" id="4.10.860.120:FF:000001">
    <property type="entry name" value="DNA-directed RNA polymerase subunit beta"/>
    <property type="match status" value="1"/>
</dbReference>
<dbReference type="Gene3D" id="1.10.132.30">
    <property type="match status" value="1"/>
</dbReference>
<dbReference type="Gene3D" id="1.10.150.390">
    <property type="match status" value="1"/>
</dbReference>
<dbReference type="Gene3D" id="1.10.1790.20">
    <property type="match status" value="1"/>
</dbReference>
<dbReference type="Gene3D" id="1.10.40.90">
    <property type="match status" value="1"/>
</dbReference>
<dbReference type="Gene3D" id="2.40.40.20">
    <property type="match status" value="1"/>
</dbReference>
<dbReference type="Gene3D" id="2.40.50.100">
    <property type="match status" value="1"/>
</dbReference>
<dbReference type="Gene3D" id="4.10.860.120">
    <property type="entry name" value="RNA polymerase II, clamp domain"/>
    <property type="match status" value="1"/>
</dbReference>
<dbReference type="Gene3D" id="1.10.274.100">
    <property type="entry name" value="RNA polymerase Rpb1, domain 3"/>
    <property type="match status" value="1"/>
</dbReference>
<dbReference type="HAMAP" id="MF_01322">
    <property type="entry name" value="RNApol_bact_RpoC"/>
    <property type="match status" value="1"/>
</dbReference>
<dbReference type="InterPro" id="IPR045867">
    <property type="entry name" value="DNA-dir_RpoC_beta_prime"/>
</dbReference>
<dbReference type="InterPro" id="IPR012754">
    <property type="entry name" value="DNA-dir_RpoC_beta_prime_bact"/>
</dbReference>
<dbReference type="InterPro" id="IPR000722">
    <property type="entry name" value="RNA_pol_asu"/>
</dbReference>
<dbReference type="InterPro" id="IPR006592">
    <property type="entry name" value="RNA_pol_N"/>
</dbReference>
<dbReference type="InterPro" id="IPR007080">
    <property type="entry name" value="RNA_pol_Rpb1_1"/>
</dbReference>
<dbReference type="InterPro" id="IPR007066">
    <property type="entry name" value="RNA_pol_Rpb1_3"/>
</dbReference>
<dbReference type="InterPro" id="IPR042102">
    <property type="entry name" value="RNA_pol_Rpb1_3_sf"/>
</dbReference>
<dbReference type="InterPro" id="IPR007083">
    <property type="entry name" value="RNA_pol_Rpb1_4"/>
</dbReference>
<dbReference type="InterPro" id="IPR007081">
    <property type="entry name" value="RNA_pol_Rpb1_5"/>
</dbReference>
<dbReference type="InterPro" id="IPR044893">
    <property type="entry name" value="RNA_pol_Rpb1_clamp_domain"/>
</dbReference>
<dbReference type="InterPro" id="IPR038120">
    <property type="entry name" value="Rpb1_funnel_sf"/>
</dbReference>
<dbReference type="NCBIfam" id="TIGR02386">
    <property type="entry name" value="rpoC_TIGR"/>
    <property type="match status" value="1"/>
</dbReference>
<dbReference type="PANTHER" id="PTHR19376">
    <property type="entry name" value="DNA-DIRECTED RNA POLYMERASE"/>
    <property type="match status" value="1"/>
</dbReference>
<dbReference type="PANTHER" id="PTHR19376:SF54">
    <property type="entry name" value="DNA-DIRECTED RNA POLYMERASE SUBUNIT BETA"/>
    <property type="match status" value="1"/>
</dbReference>
<dbReference type="Pfam" id="PF04997">
    <property type="entry name" value="RNA_pol_Rpb1_1"/>
    <property type="match status" value="1"/>
</dbReference>
<dbReference type="Pfam" id="PF00623">
    <property type="entry name" value="RNA_pol_Rpb1_2"/>
    <property type="match status" value="1"/>
</dbReference>
<dbReference type="Pfam" id="PF04983">
    <property type="entry name" value="RNA_pol_Rpb1_3"/>
    <property type="match status" value="1"/>
</dbReference>
<dbReference type="Pfam" id="PF05000">
    <property type="entry name" value="RNA_pol_Rpb1_4"/>
    <property type="match status" value="1"/>
</dbReference>
<dbReference type="Pfam" id="PF04998">
    <property type="entry name" value="RNA_pol_Rpb1_5"/>
    <property type="match status" value="1"/>
</dbReference>
<dbReference type="SMART" id="SM00663">
    <property type="entry name" value="RPOLA_N"/>
    <property type="match status" value="1"/>
</dbReference>
<dbReference type="SUPFAM" id="SSF64484">
    <property type="entry name" value="beta and beta-prime subunits of DNA dependent RNA-polymerase"/>
    <property type="match status" value="1"/>
</dbReference>
<sequence length="1207" mass="135409">MIDVNNFHYMKIGLASPEKIRSWSFGEVKKPETINYRTLKPEKDGLFCERIFGPTKDWECSCGKYKRVRYKGMVCDRCGVEVTKSKVRRERMGHIELAAPVSHIWYFKGIPSRMGLLLDMSPRALEEVIYFASYVVVDPGPTGLEKKTLLSEAEFRDYYDKYPGQFVAKMGAEGIKDLLEEIDLDEELKLLRDELESATGQRLTRAIKRLEVVESFRNSGNKPSWMILDVLPIIPPEIRPMVQLDGGRFATSDLNDLYRRVINRNNRLKRLLDLGAPGIIVQNEKRMLQEAVDALIDNGRRGRPVTGPGNRPLKSLSHMLKGKQGRFRQNLLGKRVDYSGRSVIAVGPSLKMYQCGLPKEMALELFKPFVMKELVQREIATNIKNAKSKIERMDDEVWDVLEEVIREHPVLLNRAPTLHRLGIQAFEPTLVEGRAIRLHPLVTTAYNADFDGDQMAVHVPLSKEAQAEARMLMLAAQNILNPKDGKPVVTPSQDMVLGNYYLTLERKDAVNTGAIFNNTNEVLKAYANGFVHLHTRIGVHASSFNNPTFTEEQNKKILATSVGKIIFNEIIPDSFAYINEPTQENLERKTPNRYFIDPTTLGEGGLKEYFENEELIEPFNKKFLGNIIAEVFNRFSITDTSMMLDRMKDLGFKFSSKAGITVGVADIVVLPDKQQILDEHEKLVDRITKQFNRGLITEEERYNAVVEIWTDAKDQIQGELMQSLDKTNPIFMMSDSGARGNASNFTQLAGMRGLMAAPSGKIIELPITSSFREGLTVLEYFISTHGARKGLADTALKTADSGYLTRRLVDVAQDVIVREEDCGTDRGLLVSDIKEGTEMIEPFIERIEGRYSKETIRHPETDEIIIRPDELITPEIAKKITDAGIEQMYIRSAFTCNARHGVCEKCYGKNLATGEKVEVGEAVGTIAAQSIGEPGTQLTMRTFHTGGVAGSDITQGLPRIQEIFEARNPKGQAVITEIEGVVEDIKLAKDRQQEIVVKGANETRSYLASGTSRIIVEIGQPVQRGEVLTEGSIEPKNYLSVAGLNATESYLLKEVQKVYRMQGVEIDDKHVEVMVRQMLRKVRIIEAGDTKLLPGSLVDIHNFTDANREAFKHRKRPATAKPVLLGITKASLETESFLSAASFQETTRVLTDAAIKGKRDDLLGLKENVIIGKLIPAGTGMRRYSDVKYEKTAKPVAEVESQTEVTE</sequence>
<accession>P60286</accession>
<accession>Q99W64</accession>
<gene>
    <name evidence="1" type="primary">rpoC</name>
    <name type="ordered locus">MW0498</name>
</gene>